<name>NOP58_NEOFI</name>
<feature type="chain" id="PRO_0000350987" description="Nucleolar protein 58">
    <location>
        <begin position="1"/>
        <end position="591"/>
    </location>
</feature>
<feature type="domain" description="Nop" evidence="2">
    <location>
        <begin position="285"/>
        <end position="410"/>
    </location>
</feature>
<feature type="region of interest" description="Disordered" evidence="3">
    <location>
        <begin position="413"/>
        <end position="591"/>
    </location>
</feature>
<feature type="compositionally biased region" description="Basic and acidic residues" evidence="3">
    <location>
        <begin position="430"/>
        <end position="442"/>
    </location>
</feature>
<feature type="compositionally biased region" description="Basic and acidic residues" evidence="3">
    <location>
        <begin position="453"/>
        <end position="462"/>
    </location>
</feature>
<feature type="compositionally biased region" description="Acidic residues" evidence="3">
    <location>
        <begin position="463"/>
        <end position="476"/>
    </location>
</feature>
<feature type="compositionally biased region" description="Basic and acidic residues" evidence="3">
    <location>
        <begin position="477"/>
        <end position="486"/>
    </location>
</feature>
<feature type="compositionally biased region" description="Basic and acidic residues" evidence="3">
    <location>
        <begin position="505"/>
        <end position="515"/>
    </location>
</feature>
<feature type="compositionally biased region" description="Basic and acidic residues" evidence="3">
    <location>
        <begin position="557"/>
        <end position="571"/>
    </location>
</feature>
<feature type="compositionally biased region" description="Basic residues" evidence="3">
    <location>
        <begin position="581"/>
        <end position="591"/>
    </location>
</feature>
<sequence>MTLFILTETSAGYALLKAKDKKLLKRDDLATEASTAEGVSNLVKLKSFQKFDSAATALEEVASLVEGKVTPRLASLLDEIKDEKKVSLAVADPKLGNAIGKLPGMSIQLVADSTTTDIFRAIREHLPTLIPGLLPQDMSTMSLGLSHSLARHKLKFSPDKIDTMIVQAIGLLDDLDKELNTYAMRVKEWYGWHFPELAKILNDNIAYAKLVLKMGMRSNWETADLAEILPEELEGTVKAAADRSMGTEISQEDLENIQALAEQVVGFAEYRQQLAGYLTARMNAIAPNLTALVGELVGARLIAHAGSLTNLSKSPASTIQILGAEKALFRALKTKHDTPKYGLIYHASLIGQATGKNKGKMARVLAAKASLGLRVDALAEWDDDATEEDKAALGTEARYNLERKLAAMEGKPLKPRGVAIGPNGASVQPKKFEINETRRYNADADALTGDQPASKKDKKLIEEVSDEEMADADSDEEPKANGTKDDDSSDESEEESSKKHKSKKGKDTELEKMAEKAGLSVKRYKRKLERGEITFDANGNPSATSKKELKKAKKEAKKASKGDEKKRKRSDDGEEADNGEKKKKKKKKGEE</sequence>
<dbReference type="EMBL" id="DS027690">
    <property type="protein sequence ID" value="EAW21232.1"/>
    <property type="molecule type" value="Genomic_DNA"/>
</dbReference>
<dbReference type="RefSeq" id="XP_001263129.1">
    <property type="nucleotide sequence ID" value="XM_001263128.1"/>
</dbReference>
<dbReference type="SMR" id="A1D688"/>
<dbReference type="STRING" id="331117.A1D688"/>
<dbReference type="EnsemblFungi" id="EAW21232">
    <property type="protein sequence ID" value="EAW21232"/>
    <property type="gene ID" value="NFIA_063960"/>
</dbReference>
<dbReference type="GeneID" id="4589817"/>
<dbReference type="KEGG" id="nfi:NFIA_063960"/>
<dbReference type="VEuPathDB" id="FungiDB:NFIA_063960"/>
<dbReference type="eggNOG" id="KOG2572">
    <property type="taxonomic scope" value="Eukaryota"/>
</dbReference>
<dbReference type="HOGENOM" id="CLU_015495_5_0_1"/>
<dbReference type="OMA" id="MGMRSNW"/>
<dbReference type="OrthoDB" id="6780543at2759"/>
<dbReference type="Proteomes" id="UP000006702">
    <property type="component" value="Unassembled WGS sequence"/>
</dbReference>
<dbReference type="GO" id="GO:0031428">
    <property type="term" value="C:box C/D methylation guide snoRNP complex"/>
    <property type="evidence" value="ECO:0007669"/>
    <property type="project" value="EnsemblFungi"/>
</dbReference>
<dbReference type="GO" id="GO:0005730">
    <property type="term" value="C:nucleolus"/>
    <property type="evidence" value="ECO:0007669"/>
    <property type="project" value="UniProtKB-SubCell"/>
</dbReference>
<dbReference type="GO" id="GO:0032040">
    <property type="term" value="C:small-subunit processome"/>
    <property type="evidence" value="ECO:0007669"/>
    <property type="project" value="EnsemblFungi"/>
</dbReference>
<dbReference type="GO" id="GO:0030515">
    <property type="term" value="F:snoRNA binding"/>
    <property type="evidence" value="ECO:0007669"/>
    <property type="project" value="InterPro"/>
</dbReference>
<dbReference type="GO" id="GO:0017069">
    <property type="term" value="F:snRNA binding"/>
    <property type="evidence" value="ECO:0007669"/>
    <property type="project" value="EnsemblFungi"/>
</dbReference>
<dbReference type="GO" id="GO:0000494">
    <property type="term" value="P:box C/D sno(s)RNA 3'-end processing"/>
    <property type="evidence" value="ECO:0007669"/>
    <property type="project" value="EnsemblFungi"/>
</dbReference>
<dbReference type="GO" id="GO:0000480">
    <property type="term" value="P:endonucleolytic cleavage in 5'-ETS of tricistronic rRNA transcript (SSU-rRNA, 5.8S rRNA, LSU-rRNA)"/>
    <property type="evidence" value="ECO:0007669"/>
    <property type="project" value="EnsemblFungi"/>
</dbReference>
<dbReference type="GO" id="GO:0000447">
    <property type="term" value="P:endonucleolytic cleavage in ITS1 to separate SSU-rRNA from 5.8S rRNA and LSU-rRNA from tricistronic rRNA transcript (SSU-rRNA, 5.8S rRNA, LSU-rRNA)"/>
    <property type="evidence" value="ECO:0007669"/>
    <property type="project" value="EnsemblFungi"/>
</dbReference>
<dbReference type="GO" id="GO:0000472">
    <property type="term" value="P:endonucleolytic cleavage to generate mature 5'-end of SSU-rRNA from (SSU-rRNA, 5.8S rRNA, LSU-rRNA)"/>
    <property type="evidence" value="ECO:0007669"/>
    <property type="project" value="EnsemblFungi"/>
</dbReference>
<dbReference type="GO" id="GO:1902570">
    <property type="term" value="P:protein localization to nucleolus"/>
    <property type="evidence" value="ECO:0007669"/>
    <property type="project" value="EnsemblFungi"/>
</dbReference>
<dbReference type="GO" id="GO:0000452">
    <property type="term" value="P:snoRNA guided rRNA 2'-O-methylation"/>
    <property type="evidence" value="ECO:0007669"/>
    <property type="project" value="EnsemblFungi"/>
</dbReference>
<dbReference type="FunFam" id="1.10.246.90:FF:000003">
    <property type="entry name" value="Nucleolar protein 58"/>
    <property type="match status" value="1"/>
</dbReference>
<dbReference type="FunFam" id="1.10.287.4070:FF:000001">
    <property type="entry name" value="Probable Nucleolar protein 58"/>
    <property type="match status" value="1"/>
</dbReference>
<dbReference type="Gene3D" id="1.10.287.4070">
    <property type="match status" value="1"/>
</dbReference>
<dbReference type="Gene3D" id="1.10.246.90">
    <property type="entry name" value="Nop domain"/>
    <property type="match status" value="1"/>
</dbReference>
<dbReference type="InterPro" id="IPR045056">
    <property type="entry name" value="Nop56/Nop58"/>
</dbReference>
<dbReference type="InterPro" id="IPR012974">
    <property type="entry name" value="NOP58/56_N"/>
</dbReference>
<dbReference type="InterPro" id="IPR042239">
    <property type="entry name" value="Nop_C"/>
</dbReference>
<dbReference type="InterPro" id="IPR002687">
    <property type="entry name" value="Nop_dom"/>
</dbReference>
<dbReference type="InterPro" id="IPR036070">
    <property type="entry name" value="Nop_dom_sf"/>
</dbReference>
<dbReference type="InterPro" id="IPR012976">
    <property type="entry name" value="NOSIC"/>
</dbReference>
<dbReference type="PANTHER" id="PTHR10894">
    <property type="entry name" value="NUCLEOLAR PROTEIN 5 NUCLEOLAR PROTEIN NOP5 NOP58"/>
    <property type="match status" value="1"/>
</dbReference>
<dbReference type="PANTHER" id="PTHR10894:SF1">
    <property type="entry name" value="NUCLEOLAR PROTEIN 58"/>
    <property type="match status" value="1"/>
</dbReference>
<dbReference type="Pfam" id="PF01798">
    <property type="entry name" value="Nop"/>
    <property type="match status" value="1"/>
</dbReference>
<dbReference type="Pfam" id="PF08156">
    <property type="entry name" value="NOP5NT"/>
    <property type="match status" value="1"/>
</dbReference>
<dbReference type="SMART" id="SM00931">
    <property type="entry name" value="NOSIC"/>
    <property type="match status" value="1"/>
</dbReference>
<dbReference type="SUPFAM" id="SSF89124">
    <property type="entry name" value="Nop domain"/>
    <property type="match status" value="1"/>
</dbReference>
<dbReference type="PROSITE" id="PS51358">
    <property type="entry name" value="NOP"/>
    <property type="match status" value="1"/>
</dbReference>
<evidence type="ECO:0000250" key="1"/>
<evidence type="ECO:0000255" key="2">
    <source>
        <dbReference type="PROSITE-ProRule" id="PRU00690"/>
    </source>
</evidence>
<evidence type="ECO:0000256" key="3">
    <source>
        <dbReference type="SAM" id="MobiDB-lite"/>
    </source>
</evidence>
<evidence type="ECO:0000305" key="4"/>
<proteinExistence type="inferred from homology"/>
<organism>
    <name type="scientific">Neosartorya fischeri (strain ATCC 1020 / DSM 3700 / CBS 544.65 / FGSC A1164 / JCM 1740 / NRRL 181 / WB 181)</name>
    <name type="common">Aspergillus fischerianus</name>
    <dbReference type="NCBI Taxonomy" id="331117"/>
    <lineage>
        <taxon>Eukaryota</taxon>
        <taxon>Fungi</taxon>
        <taxon>Dikarya</taxon>
        <taxon>Ascomycota</taxon>
        <taxon>Pezizomycotina</taxon>
        <taxon>Eurotiomycetes</taxon>
        <taxon>Eurotiomycetidae</taxon>
        <taxon>Eurotiales</taxon>
        <taxon>Aspergillaceae</taxon>
        <taxon>Aspergillus</taxon>
        <taxon>Aspergillus subgen. Fumigati</taxon>
    </lineage>
</organism>
<keyword id="KW-0539">Nucleus</keyword>
<keyword id="KW-1185">Reference proteome</keyword>
<keyword id="KW-0687">Ribonucleoprotein</keyword>
<keyword id="KW-0690">Ribosome biogenesis</keyword>
<keyword id="KW-0698">rRNA processing</keyword>
<comment type="function">
    <text evidence="1">Required for pre-18S rRNA processing. May bind microtubules (By similarity).</text>
</comment>
<comment type="subcellular location">
    <subcellularLocation>
        <location evidence="1">Nucleus</location>
        <location evidence="1">Nucleolus</location>
    </subcellularLocation>
</comment>
<comment type="similarity">
    <text evidence="4">Belongs to the NOP5/NOP56 family.</text>
</comment>
<accession>A1D688</accession>
<gene>
    <name type="primary">nop58</name>
    <name type="ORF">NFIA_063960</name>
</gene>
<protein>
    <recommendedName>
        <fullName>Nucleolar protein 58</fullName>
    </recommendedName>
</protein>
<reference key="1">
    <citation type="journal article" date="2008" name="PLoS Genet.">
        <title>Genomic islands in the pathogenic filamentous fungus Aspergillus fumigatus.</title>
        <authorList>
            <person name="Fedorova N.D."/>
            <person name="Khaldi N."/>
            <person name="Joardar V.S."/>
            <person name="Maiti R."/>
            <person name="Amedeo P."/>
            <person name="Anderson M.J."/>
            <person name="Crabtree J."/>
            <person name="Silva J.C."/>
            <person name="Badger J.H."/>
            <person name="Albarraq A."/>
            <person name="Angiuoli S."/>
            <person name="Bussey H."/>
            <person name="Bowyer P."/>
            <person name="Cotty P.J."/>
            <person name="Dyer P.S."/>
            <person name="Egan A."/>
            <person name="Galens K."/>
            <person name="Fraser-Liggett C.M."/>
            <person name="Haas B.J."/>
            <person name="Inman J.M."/>
            <person name="Kent R."/>
            <person name="Lemieux S."/>
            <person name="Malavazi I."/>
            <person name="Orvis J."/>
            <person name="Roemer T."/>
            <person name="Ronning C.M."/>
            <person name="Sundaram J.P."/>
            <person name="Sutton G."/>
            <person name="Turner G."/>
            <person name="Venter J.C."/>
            <person name="White O.R."/>
            <person name="Whitty B.R."/>
            <person name="Youngman P."/>
            <person name="Wolfe K.H."/>
            <person name="Goldman G.H."/>
            <person name="Wortman J.R."/>
            <person name="Jiang B."/>
            <person name="Denning D.W."/>
            <person name="Nierman W.C."/>
        </authorList>
    </citation>
    <scope>NUCLEOTIDE SEQUENCE [LARGE SCALE GENOMIC DNA]</scope>
    <source>
        <strain>ATCC 1020 / DSM 3700 / CBS 544.65 / FGSC A1164 / JCM 1740 / NRRL 181 / WB 181</strain>
    </source>
</reference>